<organism>
    <name type="scientific">Angiopteris evecta</name>
    <name type="common">Mule's foot fern</name>
    <name type="synonym">Polypodium evectum</name>
    <dbReference type="NCBI Taxonomy" id="13825"/>
    <lineage>
        <taxon>Eukaryota</taxon>
        <taxon>Viridiplantae</taxon>
        <taxon>Streptophyta</taxon>
        <taxon>Embryophyta</taxon>
        <taxon>Tracheophyta</taxon>
        <taxon>Polypodiopsida</taxon>
        <taxon>Marattiidae</taxon>
        <taxon>Marattiales</taxon>
        <taxon>Marattiaceae</taxon>
        <taxon>Angiopteris</taxon>
    </lineage>
</organism>
<name>RPOC1_ANGEV</name>
<evidence type="ECO:0000255" key="1">
    <source>
        <dbReference type="HAMAP-Rule" id="MF_01323"/>
    </source>
</evidence>
<feature type="chain" id="PRO_0000353473" description="DNA-directed RNA polymerase subunit beta'">
    <location>
        <begin position="1"/>
        <end position="687"/>
    </location>
</feature>
<feature type="binding site" evidence="1">
    <location>
        <position position="69"/>
    </location>
    <ligand>
        <name>Zn(2+)</name>
        <dbReference type="ChEBI" id="CHEBI:29105"/>
    </ligand>
</feature>
<feature type="binding site" evidence="1">
    <location>
        <position position="71"/>
    </location>
    <ligand>
        <name>Zn(2+)</name>
        <dbReference type="ChEBI" id="CHEBI:29105"/>
    </ligand>
</feature>
<feature type="binding site" evidence="1">
    <location>
        <position position="87"/>
    </location>
    <ligand>
        <name>Zn(2+)</name>
        <dbReference type="ChEBI" id="CHEBI:29105"/>
    </ligand>
</feature>
<feature type="binding site" evidence="1">
    <location>
        <position position="90"/>
    </location>
    <ligand>
        <name>Zn(2+)</name>
        <dbReference type="ChEBI" id="CHEBI:29105"/>
    </ligand>
</feature>
<feature type="binding site" evidence="1">
    <location>
        <position position="493"/>
    </location>
    <ligand>
        <name>Mg(2+)</name>
        <dbReference type="ChEBI" id="CHEBI:18420"/>
    </ligand>
</feature>
<feature type="binding site" evidence="1">
    <location>
        <position position="495"/>
    </location>
    <ligand>
        <name>Mg(2+)</name>
        <dbReference type="ChEBI" id="CHEBI:18420"/>
    </ligand>
</feature>
<feature type="binding site" evidence="1">
    <location>
        <position position="497"/>
    </location>
    <ligand>
        <name>Mg(2+)</name>
        <dbReference type="ChEBI" id="CHEBI:18420"/>
    </ligand>
</feature>
<gene>
    <name evidence="1" type="primary">rpoC1</name>
</gene>
<dbReference type="EC" id="2.7.7.6" evidence="1"/>
<dbReference type="EMBL" id="DQ821119">
    <property type="protein sequence ID" value="ABG79590.1"/>
    <property type="molecule type" value="Genomic_DNA"/>
</dbReference>
<dbReference type="RefSeq" id="YP_001023691.1">
    <property type="nucleotide sequence ID" value="NC_008829.1"/>
</dbReference>
<dbReference type="SMR" id="A2T323"/>
<dbReference type="GeneID" id="4788220"/>
<dbReference type="GO" id="GO:0009507">
    <property type="term" value="C:chloroplast"/>
    <property type="evidence" value="ECO:0007669"/>
    <property type="project" value="UniProtKB-SubCell"/>
</dbReference>
<dbReference type="GO" id="GO:0000428">
    <property type="term" value="C:DNA-directed RNA polymerase complex"/>
    <property type="evidence" value="ECO:0007669"/>
    <property type="project" value="UniProtKB-KW"/>
</dbReference>
<dbReference type="GO" id="GO:0005739">
    <property type="term" value="C:mitochondrion"/>
    <property type="evidence" value="ECO:0007669"/>
    <property type="project" value="GOC"/>
</dbReference>
<dbReference type="GO" id="GO:0003677">
    <property type="term" value="F:DNA binding"/>
    <property type="evidence" value="ECO:0007669"/>
    <property type="project" value="UniProtKB-UniRule"/>
</dbReference>
<dbReference type="GO" id="GO:0003899">
    <property type="term" value="F:DNA-directed RNA polymerase activity"/>
    <property type="evidence" value="ECO:0007669"/>
    <property type="project" value="UniProtKB-UniRule"/>
</dbReference>
<dbReference type="GO" id="GO:0000287">
    <property type="term" value="F:magnesium ion binding"/>
    <property type="evidence" value="ECO:0007669"/>
    <property type="project" value="UniProtKB-UniRule"/>
</dbReference>
<dbReference type="GO" id="GO:0008270">
    <property type="term" value="F:zinc ion binding"/>
    <property type="evidence" value="ECO:0007669"/>
    <property type="project" value="UniProtKB-UniRule"/>
</dbReference>
<dbReference type="GO" id="GO:0006351">
    <property type="term" value="P:DNA-templated transcription"/>
    <property type="evidence" value="ECO:0007669"/>
    <property type="project" value="UniProtKB-UniRule"/>
</dbReference>
<dbReference type="Gene3D" id="1.10.40.90">
    <property type="match status" value="1"/>
</dbReference>
<dbReference type="Gene3D" id="2.40.40.20">
    <property type="match status" value="1"/>
</dbReference>
<dbReference type="Gene3D" id="4.10.860.120">
    <property type="entry name" value="RNA polymerase II, clamp domain"/>
    <property type="match status" value="1"/>
</dbReference>
<dbReference type="Gene3D" id="1.10.274.100">
    <property type="entry name" value="RNA polymerase Rpb1, domain 3"/>
    <property type="match status" value="1"/>
</dbReference>
<dbReference type="HAMAP" id="MF_01323">
    <property type="entry name" value="RNApol_bact_RpoC1"/>
    <property type="match status" value="1"/>
</dbReference>
<dbReference type="InterPro" id="IPR045867">
    <property type="entry name" value="DNA-dir_RpoC_beta_prime"/>
</dbReference>
<dbReference type="InterPro" id="IPR000722">
    <property type="entry name" value="RNA_pol_asu"/>
</dbReference>
<dbReference type="InterPro" id="IPR006592">
    <property type="entry name" value="RNA_pol_N"/>
</dbReference>
<dbReference type="InterPro" id="IPR007080">
    <property type="entry name" value="RNA_pol_Rpb1_1"/>
</dbReference>
<dbReference type="InterPro" id="IPR007066">
    <property type="entry name" value="RNA_pol_Rpb1_3"/>
</dbReference>
<dbReference type="InterPro" id="IPR042102">
    <property type="entry name" value="RNA_pol_Rpb1_3_sf"/>
</dbReference>
<dbReference type="InterPro" id="IPR044893">
    <property type="entry name" value="RNA_pol_Rpb1_clamp_domain"/>
</dbReference>
<dbReference type="InterPro" id="IPR034678">
    <property type="entry name" value="RNApol_RpoC1"/>
</dbReference>
<dbReference type="PANTHER" id="PTHR19376">
    <property type="entry name" value="DNA-DIRECTED RNA POLYMERASE"/>
    <property type="match status" value="1"/>
</dbReference>
<dbReference type="PANTHER" id="PTHR19376:SF54">
    <property type="entry name" value="DNA-DIRECTED RNA POLYMERASE SUBUNIT BETA"/>
    <property type="match status" value="1"/>
</dbReference>
<dbReference type="Pfam" id="PF04997">
    <property type="entry name" value="RNA_pol_Rpb1_1"/>
    <property type="match status" value="1"/>
</dbReference>
<dbReference type="Pfam" id="PF00623">
    <property type="entry name" value="RNA_pol_Rpb1_2"/>
    <property type="match status" value="2"/>
</dbReference>
<dbReference type="Pfam" id="PF04983">
    <property type="entry name" value="RNA_pol_Rpb1_3"/>
    <property type="match status" value="1"/>
</dbReference>
<dbReference type="SMART" id="SM00663">
    <property type="entry name" value="RPOLA_N"/>
    <property type="match status" value="1"/>
</dbReference>
<dbReference type="SUPFAM" id="SSF64484">
    <property type="entry name" value="beta and beta-prime subunits of DNA dependent RNA-polymerase"/>
    <property type="match status" value="1"/>
</dbReference>
<sequence>MIHHNNYPQLRIELASPEQIRAWAERRLPNGEVVGQVTQASTFHYKTHKPERDGLFCEKIFGPIRSGICSCGNSKSVDEKKEYSNFCKQCGVEFTDSRVRRYRMGYIKLACPVTHVWYLKRLPSYIANILAKPLKELENLVYGDTYPNLFLARPVAKKPNLLRLRGLCNYDNQSWIKILSRFFSTRGFEIFQGREIATGGHAIKKQLASLDLKSVFNSAYLEWKELSEVESTEDEWEDQTIQRRKDFLIRRMKLSKHFLHTNIKPEWMVLDVLPVLPPELRPMIELSEGDVITSDFNELYRKIIYRNNILLDLLLKSAFTPEGLIICQKKLIQEAVDALIDNGIRGQPLRDSNNRPYKSFSEVIEGKEGRFRENLLGKRVDYSGRSVIVVGPSLQLHQCGLPREMAIELFQSFVIRGLIGRHLARNLRDAKNIIRNKEIFIWKILQEVMQGHPVLLNRAPTLHRLGIQAFQPVLIEGRAIRLHPLVCGGFNADFDGDQMAVHVPLSIEAQTEARVLMFSHTNLLSPATGDPIAVPSQDMLLGLYVLTIENSQGIYGNRYYPNERTKDPISSFSRIPYFSNYDDILRAKEQERVDLHSPLWLRWQKDLRIITSLTRELPIEIQYESSGISFQIYENYQIRKGQSEDILSLYILTTAGRILFNQQIEEAIQSTLEASQHRNQQLLAITI</sequence>
<geneLocation type="chloroplast"/>
<comment type="function">
    <text evidence="1">DNA-dependent RNA polymerase catalyzes the transcription of DNA into RNA using the four ribonucleoside triphosphates as substrates.</text>
</comment>
<comment type="catalytic activity">
    <reaction evidence="1">
        <text>RNA(n) + a ribonucleoside 5'-triphosphate = RNA(n+1) + diphosphate</text>
        <dbReference type="Rhea" id="RHEA:21248"/>
        <dbReference type="Rhea" id="RHEA-COMP:14527"/>
        <dbReference type="Rhea" id="RHEA-COMP:17342"/>
        <dbReference type="ChEBI" id="CHEBI:33019"/>
        <dbReference type="ChEBI" id="CHEBI:61557"/>
        <dbReference type="ChEBI" id="CHEBI:140395"/>
        <dbReference type="EC" id="2.7.7.6"/>
    </reaction>
</comment>
<comment type="cofactor">
    <cofactor evidence="1">
        <name>Mg(2+)</name>
        <dbReference type="ChEBI" id="CHEBI:18420"/>
    </cofactor>
    <text evidence="1">Binds 1 Mg(2+) ion per subunit.</text>
</comment>
<comment type="cofactor">
    <cofactor evidence="1">
        <name>Zn(2+)</name>
        <dbReference type="ChEBI" id="CHEBI:29105"/>
    </cofactor>
    <text evidence="1">Binds 1 Zn(2+) ion per subunit.</text>
</comment>
<comment type="subunit">
    <text evidence="1">In plastids the minimal PEP RNA polymerase catalytic core is composed of four subunits: alpha, beta, beta', and beta''. When a (nuclear-encoded) sigma factor is associated with the core the holoenzyme is formed, which can initiate transcription.</text>
</comment>
<comment type="subcellular location">
    <subcellularLocation>
        <location evidence="1">Plastid</location>
        <location evidence="1">Chloroplast</location>
    </subcellularLocation>
</comment>
<comment type="similarity">
    <text evidence="1">Belongs to the RNA polymerase beta' chain family. RpoC1 subfamily.</text>
</comment>
<protein>
    <recommendedName>
        <fullName evidence="1">DNA-directed RNA polymerase subunit beta'</fullName>
        <ecNumber evidence="1">2.7.7.6</ecNumber>
    </recommendedName>
    <alternativeName>
        <fullName evidence="1">PEP</fullName>
    </alternativeName>
    <alternativeName>
        <fullName evidence="1">Plastid-encoded RNA polymerase subunit beta'</fullName>
        <shortName evidence="1">RNA polymerase subunit beta'</shortName>
    </alternativeName>
</protein>
<keyword id="KW-0150">Chloroplast</keyword>
<keyword id="KW-0240">DNA-directed RNA polymerase</keyword>
<keyword id="KW-0460">Magnesium</keyword>
<keyword id="KW-0479">Metal-binding</keyword>
<keyword id="KW-0548">Nucleotidyltransferase</keyword>
<keyword id="KW-0934">Plastid</keyword>
<keyword id="KW-0804">Transcription</keyword>
<keyword id="KW-0808">Transferase</keyword>
<keyword id="KW-0862">Zinc</keyword>
<reference key="1">
    <citation type="journal article" date="2007" name="Am. Fern J.">
        <title>The complete plastid genome sequence of Angiopteris evecta (G. Forst.) Hoffm. (Marattiaceae).</title>
        <authorList>
            <person name="Roper J.M."/>
            <person name="Hansen S.K."/>
            <person name="Wolf P.G."/>
            <person name="Karol K.G."/>
            <person name="Mandoli D.F."/>
            <person name="Everett K.D.E."/>
            <person name="Kuehl J.V."/>
            <person name="Boore J.L."/>
        </authorList>
    </citation>
    <scope>NUCLEOTIDE SEQUENCE [LARGE SCALE GENOMIC DNA]</scope>
</reference>
<proteinExistence type="inferred from homology"/>
<accession>A2T323</accession>